<protein>
    <recommendedName>
        <fullName>Probable dolichyl-diphosphooligosaccharide--protein glycosyltransferase subunit 3</fullName>
    </recommendedName>
</protein>
<keyword id="KW-0256">Endoplasmic reticulum</keyword>
<keyword id="KW-0472">Membrane</keyword>
<keyword id="KW-1185">Reference proteome</keyword>
<keyword id="KW-0732">Signal</keyword>
<keyword id="KW-0812">Transmembrane</keyword>
<keyword id="KW-1133">Transmembrane helix</keyword>
<accession>Q94I55</accession>
<accession>A0A0P0VZB7</accession>
<gene>
    <name type="primary">OST3</name>
    <name type="ordered locus">Os03g0565100</name>
    <name type="ordered locus">LOC_Os03g36730</name>
    <name type="ORF">OSJNBa0084C09.17</name>
</gene>
<name>OST3_ORYSJ</name>
<proteinExistence type="evidence at transcript level"/>
<dbReference type="EMBL" id="AC016781">
    <property type="protein sequence ID" value="AAK53863.1"/>
    <property type="molecule type" value="Genomic_DNA"/>
</dbReference>
<dbReference type="EMBL" id="DP000009">
    <property type="protein sequence ID" value="ABF97146.1"/>
    <property type="molecule type" value="Genomic_DNA"/>
</dbReference>
<dbReference type="EMBL" id="AP008209">
    <property type="protein sequence ID" value="BAF12412.1"/>
    <property type="molecule type" value="Genomic_DNA"/>
</dbReference>
<dbReference type="EMBL" id="AP014959">
    <property type="protein sequence ID" value="BAS84949.1"/>
    <property type="molecule type" value="Genomic_DNA"/>
</dbReference>
<dbReference type="EMBL" id="AK061364">
    <property type="protein sequence ID" value="BAG87878.1"/>
    <property type="molecule type" value="mRNA"/>
</dbReference>
<dbReference type="EMBL" id="AK102421">
    <property type="protein sequence ID" value="BAG95548.1"/>
    <property type="molecule type" value="mRNA"/>
</dbReference>
<dbReference type="EMBL" id="AK109347">
    <property type="protein sequence ID" value="BAG98687.1"/>
    <property type="molecule type" value="mRNA"/>
</dbReference>
<dbReference type="RefSeq" id="XP_015632716.1">
    <property type="nucleotide sequence ID" value="XM_015777230.1"/>
</dbReference>
<dbReference type="SMR" id="Q94I55"/>
<dbReference type="FunCoup" id="Q94I55">
    <property type="interactions" value="1947"/>
</dbReference>
<dbReference type="STRING" id="39947.Q94I55"/>
<dbReference type="PaxDb" id="39947-Q94I55"/>
<dbReference type="EnsemblPlants" id="Os03t0565100-01">
    <property type="protein sequence ID" value="Os03t0565100-01"/>
    <property type="gene ID" value="Os03g0565100"/>
</dbReference>
<dbReference type="Gramene" id="Os03t0565100-01">
    <property type="protein sequence ID" value="Os03t0565100-01"/>
    <property type="gene ID" value="Os03g0565100"/>
</dbReference>
<dbReference type="KEGG" id="dosa:Os03g0565100"/>
<dbReference type="eggNOG" id="KOG2603">
    <property type="taxonomic scope" value="Eukaryota"/>
</dbReference>
<dbReference type="HOGENOM" id="CLU_046478_0_0_1"/>
<dbReference type="InParanoid" id="Q94I55"/>
<dbReference type="OMA" id="VLFGMYS"/>
<dbReference type="OrthoDB" id="67566at2759"/>
<dbReference type="Proteomes" id="UP000000763">
    <property type="component" value="Chromosome 3"/>
</dbReference>
<dbReference type="Proteomes" id="UP000059680">
    <property type="component" value="Chromosome 3"/>
</dbReference>
<dbReference type="GO" id="GO:0008250">
    <property type="term" value="C:oligosaccharyltransferase complex"/>
    <property type="evidence" value="ECO:0000318"/>
    <property type="project" value="GO_Central"/>
</dbReference>
<dbReference type="GO" id="GO:0018279">
    <property type="term" value="P:protein N-linked glycosylation via asparagine"/>
    <property type="evidence" value="ECO:0000318"/>
    <property type="project" value="GO_Central"/>
</dbReference>
<dbReference type="FunFam" id="3.40.30.10:FF:000205">
    <property type="entry name" value="Probable dolichyl-diphosphooligosaccharide--protein glycosyltransferase subunit 3"/>
    <property type="match status" value="1"/>
</dbReference>
<dbReference type="Gene3D" id="3.40.30.10">
    <property type="entry name" value="Glutaredoxin"/>
    <property type="match status" value="1"/>
</dbReference>
<dbReference type="InterPro" id="IPR021149">
    <property type="entry name" value="OligosaccharylTrfase_OST3/OST6"/>
</dbReference>
<dbReference type="PANTHER" id="PTHR12692">
    <property type="entry name" value="DOLICHYL-DIPHOSPHOOLIGOSACCHARIDE--PROTEIN GLYCOSYLTRANSFERASE-RELATED"/>
    <property type="match status" value="1"/>
</dbReference>
<dbReference type="PANTHER" id="PTHR12692:SF0">
    <property type="entry name" value="GH11935P"/>
    <property type="match status" value="1"/>
</dbReference>
<dbReference type="Pfam" id="PF04756">
    <property type="entry name" value="OST3_OST6"/>
    <property type="match status" value="1"/>
</dbReference>
<comment type="function">
    <text evidence="2">Subunit of the oligosaccharyl transferase (OST) complex that catalyzes the initial transfer of a defined glycan (Glc(3)Man(9)GlcNAc(2) in eukaryotes) from the lipid carrier dolichol-pyrophosphate to an asparagine residue within an Asn-X-Ser/Thr consensus motif in nascent polypeptide chains, the first step in protein N-glycosylation. N-glycosylation occurs cotranslationally and the complex associates with the Sec61 complex at the channel-forming translocon complex that mediates protein translocation across the endoplasmic reticulum (ER). All subunits are required for a maximal enzyme activity.</text>
</comment>
<comment type="subunit">
    <text evidence="2">Component of the oligosaccharyltransferase (OST) complex.</text>
</comment>
<comment type="subcellular location">
    <subcellularLocation>
        <location evidence="1">Endoplasmic reticulum membrane</location>
        <topology evidence="1">Multi-pass membrane protein</topology>
    </subcellularLocation>
</comment>
<comment type="similarity">
    <text evidence="4">Belongs to the OST3/OST6 family.</text>
</comment>
<evidence type="ECO:0000250" key="1"/>
<evidence type="ECO:0000250" key="2">
    <source>
        <dbReference type="UniProtKB" id="P48439"/>
    </source>
</evidence>
<evidence type="ECO:0000255" key="3"/>
<evidence type="ECO:0000305" key="4"/>
<sequence length="336" mass="37591">MESPPHPLLLLLTLLVAAGAASAGADDLVAELQSLRSRSPSGVIHLTDTSITRFLSAPAPRPYSVLVFFDAASLHSKTDLHLPQLRREFALLSASFLAHNPASADLFFADIEFSESQHSFAQFGVNSLPHVRLVRPEHTRLAGSEQMDQSHFSRLADSMAEFVESRTGLEVGPIVRPPLVSRNQMILLVILFLVSIPFLIKRIMDGETLFHDRRVWMAGALFIYFFSVSGGMYGIIRHTPMFITDRSDPNKLVFFYQGSGMQLGAEGFAVGFLYTLVGLMIAMVTHLLVRVESLQIQRFTMLAVMIIGWWAVKKVILLDNWKTGYSIHTFWPSSWR</sequence>
<feature type="signal peptide" evidence="3">
    <location>
        <begin position="1"/>
        <end position="25"/>
    </location>
</feature>
<feature type="chain" id="PRO_0000420817" description="Probable dolichyl-diphosphooligosaccharide--protein glycosyltransferase subunit 3">
    <location>
        <begin position="26"/>
        <end position="336"/>
    </location>
</feature>
<feature type="topological domain" description="Lumenal" evidence="3">
    <location>
        <begin position="26"/>
        <end position="183"/>
    </location>
</feature>
<feature type="transmembrane region" description="Helical" evidence="3">
    <location>
        <begin position="184"/>
        <end position="204"/>
    </location>
</feature>
<feature type="topological domain" description="Cytoplasmic" evidence="3">
    <location>
        <begin position="205"/>
        <end position="215"/>
    </location>
</feature>
<feature type="transmembrane region" description="Helical" evidence="3">
    <location>
        <begin position="216"/>
        <end position="236"/>
    </location>
</feature>
<feature type="topological domain" description="Lumenal" evidence="3">
    <location>
        <begin position="237"/>
        <end position="267"/>
    </location>
</feature>
<feature type="transmembrane region" description="Helical" evidence="3">
    <location>
        <begin position="268"/>
        <end position="288"/>
    </location>
</feature>
<feature type="topological domain" description="Cytoplasmic" evidence="3">
    <location>
        <begin position="289"/>
        <end position="298"/>
    </location>
</feature>
<feature type="transmembrane region" description="Helical" evidence="3">
    <location>
        <begin position="299"/>
        <end position="319"/>
    </location>
</feature>
<feature type="topological domain" description="Lumenal" evidence="3">
    <location>
        <begin position="320"/>
        <end position="336"/>
    </location>
</feature>
<organism>
    <name type="scientific">Oryza sativa subsp. japonica</name>
    <name type="common">Rice</name>
    <dbReference type="NCBI Taxonomy" id="39947"/>
    <lineage>
        <taxon>Eukaryota</taxon>
        <taxon>Viridiplantae</taxon>
        <taxon>Streptophyta</taxon>
        <taxon>Embryophyta</taxon>
        <taxon>Tracheophyta</taxon>
        <taxon>Spermatophyta</taxon>
        <taxon>Magnoliopsida</taxon>
        <taxon>Liliopsida</taxon>
        <taxon>Poales</taxon>
        <taxon>Poaceae</taxon>
        <taxon>BOP clade</taxon>
        <taxon>Oryzoideae</taxon>
        <taxon>Oryzeae</taxon>
        <taxon>Oryzinae</taxon>
        <taxon>Oryza</taxon>
        <taxon>Oryza sativa</taxon>
    </lineage>
</organism>
<reference key="1">
    <citation type="journal article" date="2005" name="Genome Res.">
        <title>Sequence, annotation, and analysis of synteny between rice chromosome 3 and diverged grass species.</title>
        <authorList>
            <consortium name="The rice chromosome 3 sequencing consortium"/>
            <person name="Buell C.R."/>
            <person name="Yuan Q."/>
            <person name="Ouyang S."/>
            <person name="Liu J."/>
            <person name="Zhu W."/>
            <person name="Wang A."/>
            <person name="Maiti R."/>
            <person name="Haas B."/>
            <person name="Wortman J."/>
            <person name="Pertea M."/>
            <person name="Jones K.M."/>
            <person name="Kim M."/>
            <person name="Overton L."/>
            <person name="Tsitrin T."/>
            <person name="Fadrosh D."/>
            <person name="Bera J."/>
            <person name="Weaver B."/>
            <person name="Jin S."/>
            <person name="Johri S."/>
            <person name="Reardon M."/>
            <person name="Webb K."/>
            <person name="Hill J."/>
            <person name="Moffat K."/>
            <person name="Tallon L."/>
            <person name="Van Aken S."/>
            <person name="Lewis M."/>
            <person name="Utterback T."/>
            <person name="Feldblyum T."/>
            <person name="Zismann V."/>
            <person name="Iobst S."/>
            <person name="Hsiao J."/>
            <person name="de Vazeille A.R."/>
            <person name="Salzberg S.L."/>
            <person name="White O."/>
            <person name="Fraser C.M."/>
            <person name="Yu Y."/>
            <person name="Kim H."/>
            <person name="Rambo T."/>
            <person name="Currie J."/>
            <person name="Collura K."/>
            <person name="Kernodle-Thompson S."/>
            <person name="Wei F."/>
            <person name="Kudrna K."/>
            <person name="Ammiraju J.S.S."/>
            <person name="Luo M."/>
            <person name="Goicoechea J.L."/>
            <person name="Wing R.A."/>
            <person name="Henry D."/>
            <person name="Oates R."/>
            <person name="Palmer M."/>
            <person name="Pries G."/>
            <person name="Saski C."/>
            <person name="Simmons J."/>
            <person name="Soderlund C."/>
            <person name="Nelson W."/>
            <person name="de la Bastide M."/>
            <person name="Spiegel L."/>
            <person name="Nascimento L."/>
            <person name="Huang E."/>
            <person name="Preston R."/>
            <person name="Zutavern T."/>
            <person name="Palmer L."/>
            <person name="O'Shaughnessy A."/>
            <person name="Dike S."/>
            <person name="McCombie W.R."/>
            <person name="Minx P."/>
            <person name="Cordum H."/>
            <person name="Wilson R."/>
            <person name="Jin W."/>
            <person name="Lee H.R."/>
            <person name="Jiang J."/>
            <person name="Jackson S."/>
        </authorList>
    </citation>
    <scope>NUCLEOTIDE SEQUENCE [LARGE SCALE GENOMIC DNA]</scope>
    <source>
        <strain>cv. Nipponbare</strain>
    </source>
</reference>
<reference key="2">
    <citation type="journal article" date="2005" name="Nature">
        <title>The map-based sequence of the rice genome.</title>
        <authorList>
            <consortium name="International rice genome sequencing project (IRGSP)"/>
        </authorList>
    </citation>
    <scope>NUCLEOTIDE SEQUENCE [LARGE SCALE GENOMIC DNA]</scope>
    <source>
        <strain>cv. Nipponbare</strain>
    </source>
</reference>
<reference key="3">
    <citation type="journal article" date="2008" name="Nucleic Acids Res.">
        <title>The rice annotation project database (RAP-DB): 2008 update.</title>
        <authorList>
            <consortium name="The rice annotation project (RAP)"/>
        </authorList>
    </citation>
    <scope>GENOME REANNOTATION</scope>
    <source>
        <strain>cv. Nipponbare</strain>
    </source>
</reference>
<reference key="4">
    <citation type="journal article" date="2013" name="Rice">
        <title>Improvement of the Oryza sativa Nipponbare reference genome using next generation sequence and optical map data.</title>
        <authorList>
            <person name="Kawahara Y."/>
            <person name="de la Bastide M."/>
            <person name="Hamilton J.P."/>
            <person name="Kanamori H."/>
            <person name="McCombie W.R."/>
            <person name="Ouyang S."/>
            <person name="Schwartz D.C."/>
            <person name="Tanaka T."/>
            <person name="Wu J."/>
            <person name="Zhou S."/>
            <person name="Childs K.L."/>
            <person name="Davidson R.M."/>
            <person name="Lin H."/>
            <person name="Quesada-Ocampo L."/>
            <person name="Vaillancourt B."/>
            <person name="Sakai H."/>
            <person name="Lee S.S."/>
            <person name="Kim J."/>
            <person name="Numa H."/>
            <person name="Itoh T."/>
            <person name="Buell C.R."/>
            <person name="Matsumoto T."/>
        </authorList>
    </citation>
    <scope>GENOME REANNOTATION</scope>
    <source>
        <strain>cv. Nipponbare</strain>
    </source>
</reference>
<reference key="5">
    <citation type="journal article" date="2003" name="Science">
        <title>Collection, mapping, and annotation of over 28,000 cDNA clones from japonica rice.</title>
        <authorList>
            <consortium name="The rice full-length cDNA consortium"/>
        </authorList>
    </citation>
    <scope>NUCLEOTIDE SEQUENCE [LARGE SCALE MRNA]</scope>
    <source>
        <strain>cv. Nipponbare</strain>
    </source>
</reference>